<dbReference type="EMBL" id="CP001176">
    <property type="protein sequence ID" value="ACK63082.1"/>
    <property type="molecule type" value="Genomic_DNA"/>
</dbReference>
<dbReference type="RefSeq" id="WP_000954941.1">
    <property type="nucleotide sequence ID" value="NZ_VEHB01000006.1"/>
</dbReference>
<dbReference type="SMR" id="B7HCU2"/>
<dbReference type="KEGG" id="bcb:BCB4264_A4435"/>
<dbReference type="HOGENOM" id="CLU_050019_1_0_9"/>
<dbReference type="Proteomes" id="UP000007096">
    <property type="component" value="Chromosome"/>
</dbReference>
<dbReference type="GO" id="GO:0003677">
    <property type="term" value="F:DNA binding"/>
    <property type="evidence" value="ECO:0007669"/>
    <property type="project" value="InterPro"/>
</dbReference>
<dbReference type="GO" id="GO:0045892">
    <property type="term" value="P:negative regulation of DNA-templated transcription"/>
    <property type="evidence" value="ECO:0007669"/>
    <property type="project" value="UniProtKB-UniRule"/>
</dbReference>
<dbReference type="FunFam" id="1.10.10.10:FF:000049">
    <property type="entry name" value="Heat-inducible transcription repressor HrcA"/>
    <property type="match status" value="1"/>
</dbReference>
<dbReference type="FunFam" id="3.30.390.60:FF:000001">
    <property type="entry name" value="Heat-inducible transcription repressor HrcA"/>
    <property type="match status" value="1"/>
</dbReference>
<dbReference type="Gene3D" id="3.30.450.40">
    <property type="match status" value="1"/>
</dbReference>
<dbReference type="Gene3D" id="3.30.390.60">
    <property type="entry name" value="Heat-inducible transcription repressor hrca homolog, domain 3"/>
    <property type="match status" value="1"/>
</dbReference>
<dbReference type="Gene3D" id="1.10.10.10">
    <property type="entry name" value="Winged helix-like DNA-binding domain superfamily/Winged helix DNA-binding domain"/>
    <property type="match status" value="1"/>
</dbReference>
<dbReference type="HAMAP" id="MF_00081">
    <property type="entry name" value="HrcA"/>
    <property type="match status" value="1"/>
</dbReference>
<dbReference type="InterPro" id="IPR029016">
    <property type="entry name" value="GAF-like_dom_sf"/>
</dbReference>
<dbReference type="InterPro" id="IPR002571">
    <property type="entry name" value="HrcA"/>
</dbReference>
<dbReference type="InterPro" id="IPR021153">
    <property type="entry name" value="HrcA_C"/>
</dbReference>
<dbReference type="InterPro" id="IPR036388">
    <property type="entry name" value="WH-like_DNA-bd_sf"/>
</dbReference>
<dbReference type="InterPro" id="IPR036390">
    <property type="entry name" value="WH_DNA-bd_sf"/>
</dbReference>
<dbReference type="InterPro" id="IPR023120">
    <property type="entry name" value="WHTH_transcript_rep_HrcA_IDD"/>
</dbReference>
<dbReference type="NCBIfam" id="TIGR00331">
    <property type="entry name" value="hrcA"/>
    <property type="match status" value="1"/>
</dbReference>
<dbReference type="PANTHER" id="PTHR34824">
    <property type="entry name" value="HEAT-INDUCIBLE TRANSCRIPTION REPRESSOR HRCA"/>
    <property type="match status" value="1"/>
</dbReference>
<dbReference type="PANTHER" id="PTHR34824:SF1">
    <property type="entry name" value="HEAT-INDUCIBLE TRANSCRIPTION REPRESSOR HRCA"/>
    <property type="match status" value="1"/>
</dbReference>
<dbReference type="Pfam" id="PF01628">
    <property type="entry name" value="HrcA"/>
    <property type="match status" value="1"/>
</dbReference>
<dbReference type="PIRSF" id="PIRSF005485">
    <property type="entry name" value="HrcA"/>
    <property type="match status" value="1"/>
</dbReference>
<dbReference type="SUPFAM" id="SSF55781">
    <property type="entry name" value="GAF domain-like"/>
    <property type="match status" value="1"/>
</dbReference>
<dbReference type="SUPFAM" id="SSF46785">
    <property type="entry name" value="Winged helix' DNA-binding domain"/>
    <property type="match status" value="1"/>
</dbReference>
<feature type="chain" id="PRO_1000117108" description="Heat-inducible transcription repressor HrcA">
    <location>
        <begin position="1"/>
        <end position="338"/>
    </location>
</feature>
<reference key="1">
    <citation type="submission" date="2008-10" db="EMBL/GenBank/DDBJ databases">
        <title>Genome sequence of Bacillus cereus B4264.</title>
        <authorList>
            <person name="Dodson R.J."/>
            <person name="Durkin A.S."/>
            <person name="Rosovitz M.J."/>
            <person name="Rasko D.A."/>
            <person name="Hoffmaster A."/>
            <person name="Ravel J."/>
            <person name="Sutton G."/>
        </authorList>
    </citation>
    <scope>NUCLEOTIDE SEQUENCE [LARGE SCALE GENOMIC DNA]</scope>
    <source>
        <strain>B4264</strain>
    </source>
</reference>
<name>HRCA_BACC4</name>
<evidence type="ECO:0000255" key="1">
    <source>
        <dbReference type="HAMAP-Rule" id="MF_00081"/>
    </source>
</evidence>
<accession>B7HCU2</accession>
<gene>
    <name evidence="1" type="primary">hrcA</name>
    <name type="ordered locus">BCB4264_A4435</name>
</gene>
<proteinExistence type="inferred from homology"/>
<comment type="function">
    <text evidence="1">Negative regulator of class I heat shock genes (grpE-dnaK-dnaJ and groELS operons). Prevents heat-shock induction of these operons.</text>
</comment>
<comment type="similarity">
    <text evidence="1">Belongs to the HrcA family.</text>
</comment>
<keyword id="KW-0678">Repressor</keyword>
<keyword id="KW-0346">Stress response</keyword>
<keyword id="KW-0804">Transcription</keyword>
<keyword id="KW-0805">Transcription regulation</keyword>
<sequence length="338" mass="37921">MLTERQLLILQTIIDDFIGSAQPVGSRTLAKKDEITFSSATIRNEMADLEELGFIEKTHSSSGRVPSEKGYRFYVDHLLAPQNLPNAEIVQIKDLFAERIFEAEKIAQQSAQILSELTNYTAIVLGPKLSTNKLKNVQIVPLDRQTAVAIIVTDTGHVQSKTITVPESVDLSDLEKMVNILNEKLSGVPMEELHNKIFKEIVTVLRGYVHNYDSAIKMLDGTFQVPLSEKIYFGGKANMLSQPEFHDIQKVRSLLTMIDNEAEFYDILRHKQVGIQVKIGRENSSTAMEDCSLISATYSIGEEQLGTIAILGPTRMQYSRVISLLQLFTRQFTDGLKK</sequence>
<organism>
    <name type="scientific">Bacillus cereus (strain B4264)</name>
    <dbReference type="NCBI Taxonomy" id="405532"/>
    <lineage>
        <taxon>Bacteria</taxon>
        <taxon>Bacillati</taxon>
        <taxon>Bacillota</taxon>
        <taxon>Bacilli</taxon>
        <taxon>Bacillales</taxon>
        <taxon>Bacillaceae</taxon>
        <taxon>Bacillus</taxon>
        <taxon>Bacillus cereus group</taxon>
    </lineage>
</organism>
<protein>
    <recommendedName>
        <fullName evidence="1">Heat-inducible transcription repressor HrcA</fullName>
    </recommendedName>
</protein>